<protein>
    <recommendedName>
        <fullName evidence="1">Aspartate carbamoyltransferase catalytic subunit</fullName>
        <ecNumber evidence="1">2.1.3.2</ecNumber>
    </recommendedName>
    <alternativeName>
        <fullName evidence="1">Aspartate transcarbamylase</fullName>
        <shortName evidence="1">ATCase</shortName>
    </alternativeName>
</protein>
<organism>
    <name type="scientific">Polynucleobacter asymbioticus (strain DSM 18221 / CIP 109841 / QLW-P1DMWA-1)</name>
    <name type="common">Polynucleobacter necessarius subsp. asymbioticus</name>
    <dbReference type="NCBI Taxonomy" id="312153"/>
    <lineage>
        <taxon>Bacteria</taxon>
        <taxon>Pseudomonadati</taxon>
        <taxon>Pseudomonadota</taxon>
        <taxon>Betaproteobacteria</taxon>
        <taxon>Burkholderiales</taxon>
        <taxon>Burkholderiaceae</taxon>
        <taxon>Polynucleobacter</taxon>
    </lineage>
</organism>
<keyword id="KW-0665">Pyrimidine biosynthesis</keyword>
<keyword id="KW-1185">Reference proteome</keyword>
<keyword id="KW-0808">Transferase</keyword>
<gene>
    <name evidence="1" type="primary">pyrB</name>
    <name type="ordered locus">Pnuc_0246</name>
</gene>
<name>PYRB_POLAQ</name>
<comment type="function">
    <text evidence="1">Catalyzes the condensation of carbamoyl phosphate and aspartate to form carbamoyl aspartate and inorganic phosphate, the committed step in the de novo pyrimidine nucleotide biosynthesis pathway.</text>
</comment>
<comment type="catalytic activity">
    <reaction evidence="1">
        <text>carbamoyl phosphate + L-aspartate = N-carbamoyl-L-aspartate + phosphate + H(+)</text>
        <dbReference type="Rhea" id="RHEA:20013"/>
        <dbReference type="ChEBI" id="CHEBI:15378"/>
        <dbReference type="ChEBI" id="CHEBI:29991"/>
        <dbReference type="ChEBI" id="CHEBI:32814"/>
        <dbReference type="ChEBI" id="CHEBI:43474"/>
        <dbReference type="ChEBI" id="CHEBI:58228"/>
        <dbReference type="EC" id="2.1.3.2"/>
    </reaction>
</comment>
<comment type="pathway">
    <text evidence="1">Pyrimidine metabolism; UMP biosynthesis via de novo pathway; (S)-dihydroorotate from bicarbonate: step 2/3.</text>
</comment>
<comment type="subunit">
    <text evidence="1">Heterododecamer (2C3:3R2) of six catalytic PyrB chains organized as two trimers (C3), and six regulatory PyrI chains organized as three dimers (R2).</text>
</comment>
<comment type="similarity">
    <text evidence="1">Belongs to the aspartate/ornithine carbamoyltransferase superfamily. ATCase family.</text>
</comment>
<feature type="chain" id="PRO_0000329112" description="Aspartate carbamoyltransferase catalytic subunit">
    <location>
        <begin position="1"/>
        <end position="326"/>
    </location>
</feature>
<feature type="binding site" evidence="1">
    <location>
        <position position="76"/>
    </location>
    <ligand>
        <name>carbamoyl phosphate</name>
        <dbReference type="ChEBI" id="CHEBI:58228"/>
    </ligand>
</feature>
<feature type="binding site" evidence="1">
    <location>
        <position position="77"/>
    </location>
    <ligand>
        <name>carbamoyl phosphate</name>
        <dbReference type="ChEBI" id="CHEBI:58228"/>
    </ligand>
</feature>
<feature type="binding site" evidence="1">
    <location>
        <position position="104"/>
    </location>
    <ligand>
        <name>L-aspartate</name>
        <dbReference type="ChEBI" id="CHEBI:29991"/>
    </ligand>
</feature>
<feature type="binding site" evidence="1">
    <location>
        <position position="126"/>
    </location>
    <ligand>
        <name>carbamoyl phosphate</name>
        <dbReference type="ChEBI" id="CHEBI:58228"/>
    </ligand>
</feature>
<feature type="binding site" evidence="1">
    <location>
        <position position="156"/>
    </location>
    <ligand>
        <name>carbamoyl phosphate</name>
        <dbReference type="ChEBI" id="CHEBI:58228"/>
    </ligand>
</feature>
<feature type="binding site" evidence="1">
    <location>
        <position position="159"/>
    </location>
    <ligand>
        <name>carbamoyl phosphate</name>
        <dbReference type="ChEBI" id="CHEBI:58228"/>
    </ligand>
</feature>
<feature type="binding site" evidence="1">
    <location>
        <position position="189"/>
    </location>
    <ligand>
        <name>L-aspartate</name>
        <dbReference type="ChEBI" id="CHEBI:29991"/>
    </ligand>
</feature>
<feature type="binding site" evidence="1">
    <location>
        <position position="244"/>
    </location>
    <ligand>
        <name>L-aspartate</name>
        <dbReference type="ChEBI" id="CHEBI:29991"/>
    </ligand>
</feature>
<feature type="binding site" evidence="1">
    <location>
        <position position="285"/>
    </location>
    <ligand>
        <name>carbamoyl phosphate</name>
        <dbReference type="ChEBI" id="CHEBI:58228"/>
    </ligand>
</feature>
<feature type="binding site" evidence="1">
    <location>
        <position position="286"/>
    </location>
    <ligand>
        <name>carbamoyl phosphate</name>
        <dbReference type="ChEBI" id="CHEBI:58228"/>
    </ligand>
</feature>
<reference key="1">
    <citation type="journal article" date="2012" name="Stand. Genomic Sci.">
        <title>Complete genome sequence of Polynucleobacter necessarius subsp. asymbioticus type strain (QLW-P1DMWA-1(T)).</title>
        <authorList>
            <person name="Meincke L."/>
            <person name="Copeland A."/>
            <person name="Lapidus A."/>
            <person name="Lucas S."/>
            <person name="Berry K.W."/>
            <person name="Del Rio T.G."/>
            <person name="Hammon N."/>
            <person name="Dalin E."/>
            <person name="Tice H."/>
            <person name="Pitluck S."/>
            <person name="Richardson P."/>
            <person name="Bruce D."/>
            <person name="Goodwin L."/>
            <person name="Han C."/>
            <person name="Tapia R."/>
            <person name="Detter J.C."/>
            <person name="Schmutz J."/>
            <person name="Brettin T."/>
            <person name="Larimer F."/>
            <person name="Land M."/>
            <person name="Hauser L."/>
            <person name="Kyrpides N.C."/>
            <person name="Ivanova N."/>
            <person name="Goker M."/>
            <person name="Woyke T."/>
            <person name="Wu Q.L."/>
            <person name="Pockl M."/>
            <person name="Hahn M.W."/>
            <person name="Klenk H.P."/>
        </authorList>
    </citation>
    <scope>NUCLEOTIDE SEQUENCE [LARGE SCALE GENOMIC DNA]</scope>
    <source>
        <strain>DSM 18221 / CIP 109841 / QLW-P1DMWA-1</strain>
    </source>
</reference>
<sequence>MSSENNAGANLVNQFNAAGELTHLLTLEGLPKEQILHILDTAQQFVSVTDPSREVKKVPLLRGKSVFNLFFENSTRTRTTFEIAAKRLSADVINLDISTSSTAKGESLLDTIDNLVAMQADIFVVRHSVSRAPIEIANHVPTHVHVVNAGDGSHQHPTQGLLDMYTMRHFKQNFKGLKVAIVGDIVHSRVAKSNIHALTTLGCEDIRVIGPESLLPSDLDMLGVKVYHSMEEGLKDVDVVMTLRIQKERMEAGQVPEGDAFFNQYGLTPTRLALAKSDAIVMHPGPMNRGVEIDSVVADGPQSVILNQVTFGIAVRMAVMSIVAGN</sequence>
<evidence type="ECO:0000255" key="1">
    <source>
        <dbReference type="HAMAP-Rule" id="MF_00001"/>
    </source>
</evidence>
<accession>A4SVF3</accession>
<proteinExistence type="inferred from homology"/>
<dbReference type="EC" id="2.1.3.2" evidence="1"/>
<dbReference type="EMBL" id="CP000655">
    <property type="protein sequence ID" value="ABP33467.1"/>
    <property type="molecule type" value="Genomic_DNA"/>
</dbReference>
<dbReference type="RefSeq" id="WP_011902092.1">
    <property type="nucleotide sequence ID" value="NC_009379.1"/>
</dbReference>
<dbReference type="SMR" id="A4SVF3"/>
<dbReference type="GeneID" id="31480596"/>
<dbReference type="KEGG" id="pnu:Pnuc_0246"/>
<dbReference type="eggNOG" id="COG0540">
    <property type="taxonomic scope" value="Bacteria"/>
</dbReference>
<dbReference type="HOGENOM" id="CLU_043846_2_0_4"/>
<dbReference type="UniPathway" id="UPA00070">
    <property type="reaction ID" value="UER00116"/>
</dbReference>
<dbReference type="Proteomes" id="UP000000231">
    <property type="component" value="Chromosome"/>
</dbReference>
<dbReference type="GO" id="GO:0005829">
    <property type="term" value="C:cytosol"/>
    <property type="evidence" value="ECO:0007669"/>
    <property type="project" value="TreeGrafter"/>
</dbReference>
<dbReference type="GO" id="GO:0016597">
    <property type="term" value="F:amino acid binding"/>
    <property type="evidence" value="ECO:0007669"/>
    <property type="project" value="InterPro"/>
</dbReference>
<dbReference type="GO" id="GO:0004070">
    <property type="term" value="F:aspartate carbamoyltransferase activity"/>
    <property type="evidence" value="ECO:0007669"/>
    <property type="project" value="UniProtKB-UniRule"/>
</dbReference>
<dbReference type="GO" id="GO:0006207">
    <property type="term" value="P:'de novo' pyrimidine nucleobase biosynthetic process"/>
    <property type="evidence" value="ECO:0007669"/>
    <property type="project" value="InterPro"/>
</dbReference>
<dbReference type="GO" id="GO:0044205">
    <property type="term" value="P:'de novo' UMP biosynthetic process"/>
    <property type="evidence" value="ECO:0007669"/>
    <property type="project" value="UniProtKB-UniRule"/>
</dbReference>
<dbReference type="GO" id="GO:0006520">
    <property type="term" value="P:amino acid metabolic process"/>
    <property type="evidence" value="ECO:0007669"/>
    <property type="project" value="InterPro"/>
</dbReference>
<dbReference type="FunFam" id="3.40.50.1370:FF:000007">
    <property type="entry name" value="Aspartate carbamoyltransferase"/>
    <property type="match status" value="1"/>
</dbReference>
<dbReference type="Gene3D" id="3.40.50.1370">
    <property type="entry name" value="Aspartate/ornithine carbamoyltransferase"/>
    <property type="match status" value="2"/>
</dbReference>
<dbReference type="HAMAP" id="MF_00001">
    <property type="entry name" value="Asp_carb_tr"/>
    <property type="match status" value="1"/>
</dbReference>
<dbReference type="InterPro" id="IPR006132">
    <property type="entry name" value="Asp/Orn_carbamoyltranf_P-bd"/>
</dbReference>
<dbReference type="InterPro" id="IPR006130">
    <property type="entry name" value="Asp/Orn_carbamoylTrfase"/>
</dbReference>
<dbReference type="InterPro" id="IPR036901">
    <property type="entry name" value="Asp/Orn_carbamoylTrfase_sf"/>
</dbReference>
<dbReference type="InterPro" id="IPR002082">
    <property type="entry name" value="Asp_carbamoyltransf"/>
</dbReference>
<dbReference type="InterPro" id="IPR006131">
    <property type="entry name" value="Asp_carbamoyltransf_Asp/Orn-bd"/>
</dbReference>
<dbReference type="NCBIfam" id="TIGR00670">
    <property type="entry name" value="asp_carb_tr"/>
    <property type="match status" value="1"/>
</dbReference>
<dbReference type="NCBIfam" id="NF002032">
    <property type="entry name" value="PRK00856.1"/>
    <property type="match status" value="1"/>
</dbReference>
<dbReference type="PANTHER" id="PTHR45753:SF6">
    <property type="entry name" value="ASPARTATE CARBAMOYLTRANSFERASE"/>
    <property type="match status" value="1"/>
</dbReference>
<dbReference type="PANTHER" id="PTHR45753">
    <property type="entry name" value="ORNITHINE CARBAMOYLTRANSFERASE, MITOCHONDRIAL"/>
    <property type="match status" value="1"/>
</dbReference>
<dbReference type="Pfam" id="PF00185">
    <property type="entry name" value="OTCace"/>
    <property type="match status" value="1"/>
</dbReference>
<dbReference type="Pfam" id="PF02729">
    <property type="entry name" value="OTCace_N"/>
    <property type="match status" value="1"/>
</dbReference>
<dbReference type="PRINTS" id="PR00100">
    <property type="entry name" value="AOTCASE"/>
</dbReference>
<dbReference type="PRINTS" id="PR00101">
    <property type="entry name" value="ATCASE"/>
</dbReference>
<dbReference type="SUPFAM" id="SSF53671">
    <property type="entry name" value="Aspartate/ornithine carbamoyltransferase"/>
    <property type="match status" value="1"/>
</dbReference>
<dbReference type="PROSITE" id="PS00097">
    <property type="entry name" value="CARBAMOYLTRANSFERASE"/>
    <property type="match status" value="1"/>
</dbReference>